<dbReference type="EC" id="2.7.11.1" evidence="1"/>
<dbReference type="EMBL" id="JQ247189">
    <property type="protein sequence ID" value="AEZ01402.1"/>
    <property type="molecule type" value="mRNA"/>
</dbReference>
<dbReference type="EMBL" id="JQ247190">
    <property type="protein sequence ID" value="AEZ01403.1"/>
    <property type="molecule type" value="mRNA"/>
</dbReference>
<dbReference type="EMBL" id="AL732420">
    <property type="status" value="NOT_ANNOTATED_CDS"/>
    <property type="molecule type" value="Genomic_DNA"/>
</dbReference>
<dbReference type="EMBL" id="AL807396">
    <property type="status" value="NOT_ANNOTATED_CDS"/>
    <property type="molecule type" value="Genomic_DNA"/>
</dbReference>
<dbReference type="EMBL" id="BC043119">
    <property type="protein sequence ID" value="AAH43119.1"/>
    <property type="molecule type" value="mRNA"/>
</dbReference>
<dbReference type="EMBL" id="BC060731">
    <property type="protein sequence ID" value="AAH60731.1"/>
    <property type="molecule type" value="mRNA"/>
</dbReference>
<dbReference type="CCDS" id="CCDS72450.1">
    <molecule id="Q80XP9-2"/>
</dbReference>
<dbReference type="CCDS" id="CCDS72451.1">
    <molecule id="Q80XP9-1"/>
</dbReference>
<dbReference type="RefSeq" id="NP_001258607.1">
    <molecule id="Q80XP9-1"/>
    <property type="nucleotide sequence ID" value="NM_001271678.1"/>
</dbReference>
<dbReference type="RefSeq" id="NP_001258608.1">
    <molecule id="Q80XP9-2"/>
    <property type="nucleotide sequence ID" value="NM_001271679.1"/>
</dbReference>
<dbReference type="RefSeq" id="XP_006528933.1">
    <molecule id="Q80XP9-1"/>
    <property type="nucleotide sequence ID" value="XM_006528870.5"/>
</dbReference>
<dbReference type="RefSeq" id="XP_006528934.1">
    <molecule id="Q80XP9-1"/>
    <property type="nucleotide sequence ID" value="XM_006528871.5"/>
</dbReference>
<dbReference type="RefSeq" id="XP_006528935.1">
    <molecule id="Q80XP9-1"/>
    <property type="nucleotide sequence ID" value="XM_006528872.5"/>
</dbReference>
<dbReference type="RefSeq" id="XP_006528936.1">
    <molecule id="Q80XP9-1"/>
    <property type="nucleotide sequence ID" value="XM_006528873.5"/>
</dbReference>
<dbReference type="RefSeq" id="XP_006528937.1">
    <property type="nucleotide sequence ID" value="XM_006528874.3"/>
</dbReference>
<dbReference type="RefSeq" id="XP_011246131.1">
    <molecule id="Q80XP9-1"/>
    <property type="nucleotide sequence ID" value="XM_011247829.4"/>
</dbReference>
<dbReference type="RefSeq" id="XP_011246132.1">
    <molecule id="Q80XP9-1"/>
    <property type="nucleotide sequence ID" value="XM_011247830.4"/>
</dbReference>
<dbReference type="RefSeq" id="XP_030107222.1">
    <molecule id="Q80XP9-1"/>
    <property type="nucleotide sequence ID" value="XM_030251362.1"/>
</dbReference>
<dbReference type="RefSeq" id="XP_030107223.1">
    <molecule id="Q80XP9-2"/>
    <property type="nucleotide sequence ID" value="XM_030251363.2"/>
</dbReference>
<dbReference type="RefSeq" id="XP_036017870.1">
    <molecule id="Q80XP9-2"/>
    <property type="nucleotide sequence ID" value="XM_036161977.1"/>
</dbReference>
<dbReference type="SMR" id="Q80XP9"/>
<dbReference type="BioGRID" id="235005">
    <property type="interactions" value="5"/>
</dbReference>
<dbReference type="FunCoup" id="Q80XP9">
    <property type="interactions" value="266"/>
</dbReference>
<dbReference type="IntAct" id="Q80XP9">
    <property type="interactions" value="1"/>
</dbReference>
<dbReference type="STRING" id="10090.ENSMUSP00000139037"/>
<dbReference type="GlyGen" id="Q80XP9">
    <property type="glycosylation" value="8 sites, 1 O-linked glycan (5 sites)"/>
</dbReference>
<dbReference type="iPTMnet" id="Q80XP9"/>
<dbReference type="PhosphoSitePlus" id="Q80XP9"/>
<dbReference type="PaxDb" id="10090-ENSMUSP00000138839"/>
<dbReference type="PeptideAtlas" id="Q80XP9"/>
<dbReference type="ProteomicsDB" id="299792">
    <molecule id="Q80XP9-1"/>
</dbReference>
<dbReference type="ProteomicsDB" id="299793">
    <molecule id="Q80XP9-2"/>
</dbReference>
<dbReference type="Antibodypedia" id="26766">
    <property type="antibodies" value="262 antibodies from 29 providers"/>
</dbReference>
<dbReference type="DNASU" id="279561"/>
<dbReference type="Ensembl" id="ENSMUST00000184392.8">
    <molecule id="Q80XP9-1"/>
    <property type="protein sequence ID" value="ENSMUSP00000139037.2"/>
    <property type="gene ID" value="ENSMUSG00000041245.15"/>
</dbReference>
<dbReference type="Ensembl" id="ENSMUST00000184730.8">
    <molecule id="Q80XP9-2"/>
    <property type="protein sequence ID" value="ENSMUSP00000138822.2"/>
    <property type="gene ID" value="ENSMUSG00000041245.15"/>
</dbReference>
<dbReference type="GeneID" id="279561"/>
<dbReference type="KEGG" id="mmu:279561"/>
<dbReference type="UCSC" id="uc009upa.3">
    <molecule id="Q80XP9-2"/>
    <property type="organism name" value="mouse"/>
</dbReference>
<dbReference type="UCSC" id="uc029xnn.2">
    <molecule id="Q80XP9-1"/>
    <property type="organism name" value="mouse"/>
</dbReference>
<dbReference type="AGR" id="MGI:2652875"/>
<dbReference type="CTD" id="65267"/>
<dbReference type="MGI" id="MGI:2652875">
    <property type="gene designation" value="Wnk3"/>
</dbReference>
<dbReference type="VEuPathDB" id="HostDB:ENSMUSG00000041245"/>
<dbReference type="eggNOG" id="KOG0584">
    <property type="taxonomic scope" value="Eukaryota"/>
</dbReference>
<dbReference type="GeneTree" id="ENSGT00940000160145"/>
<dbReference type="HOGENOM" id="CLU_000550_1_1_1"/>
<dbReference type="InParanoid" id="Q80XP9"/>
<dbReference type="OMA" id="ENNPCQH"/>
<dbReference type="BioGRID-ORCS" id="279561">
    <property type="hits" value="2 hits in 76 CRISPR screens"/>
</dbReference>
<dbReference type="ChiTaRS" id="Wnk3">
    <property type="organism name" value="mouse"/>
</dbReference>
<dbReference type="PRO" id="PR:Q80XP9"/>
<dbReference type="Proteomes" id="UP000000589">
    <property type="component" value="Chromosome X"/>
</dbReference>
<dbReference type="RNAct" id="Q80XP9">
    <property type="molecule type" value="protein"/>
</dbReference>
<dbReference type="Bgee" id="ENSMUSG00000041245">
    <property type="expression patterns" value="Expressed in medial preoptic region and 167 other cell types or tissues"/>
</dbReference>
<dbReference type="ExpressionAtlas" id="Q80XP9">
    <property type="expression patterns" value="baseline and differential"/>
</dbReference>
<dbReference type="GO" id="GO:0005912">
    <property type="term" value="C:adherens junction"/>
    <property type="evidence" value="ECO:0000314"/>
    <property type="project" value="BHF-UCL"/>
</dbReference>
<dbReference type="GO" id="GO:0005923">
    <property type="term" value="C:bicellular tight junction"/>
    <property type="evidence" value="ECO:0000314"/>
    <property type="project" value="BHF-UCL"/>
</dbReference>
<dbReference type="GO" id="GO:0005737">
    <property type="term" value="C:cytoplasm"/>
    <property type="evidence" value="ECO:0007669"/>
    <property type="project" value="UniProtKB-SubCell"/>
</dbReference>
<dbReference type="GO" id="GO:0005524">
    <property type="term" value="F:ATP binding"/>
    <property type="evidence" value="ECO:0007669"/>
    <property type="project" value="UniProtKB-KW"/>
</dbReference>
<dbReference type="GO" id="GO:0140693">
    <property type="term" value="F:molecular condensate scaffold activity"/>
    <property type="evidence" value="ECO:0000250"/>
    <property type="project" value="UniProtKB"/>
</dbReference>
<dbReference type="GO" id="GO:0004672">
    <property type="term" value="F:protein kinase activity"/>
    <property type="evidence" value="ECO:0000250"/>
    <property type="project" value="UniProtKB"/>
</dbReference>
<dbReference type="GO" id="GO:0106310">
    <property type="term" value="F:protein serine kinase activity"/>
    <property type="evidence" value="ECO:0007669"/>
    <property type="project" value="RHEA"/>
</dbReference>
<dbReference type="GO" id="GO:0004674">
    <property type="term" value="F:protein serine/threonine kinase activity"/>
    <property type="evidence" value="ECO:0007669"/>
    <property type="project" value="UniProtKB-KW"/>
</dbReference>
<dbReference type="GO" id="GO:0044325">
    <property type="term" value="F:transmembrane transporter binding"/>
    <property type="evidence" value="ECO:0007669"/>
    <property type="project" value="Ensembl"/>
</dbReference>
<dbReference type="GO" id="GO:0141109">
    <property type="term" value="F:transporter activator activity"/>
    <property type="evidence" value="ECO:0007669"/>
    <property type="project" value="Ensembl"/>
</dbReference>
<dbReference type="GO" id="GO:0006884">
    <property type="term" value="P:cell volume homeostasis"/>
    <property type="evidence" value="ECO:0000315"/>
    <property type="project" value="ARUK-UCL"/>
</dbReference>
<dbReference type="GO" id="GO:0071474">
    <property type="term" value="P:cellular hyperosmotic response"/>
    <property type="evidence" value="ECO:0000250"/>
    <property type="project" value="UniProtKB"/>
</dbReference>
<dbReference type="GO" id="GO:0035633">
    <property type="term" value="P:maintenance of blood-brain barrier"/>
    <property type="evidence" value="ECO:0000315"/>
    <property type="project" value="ARUK-UCL"/>
</dbReference>
<dbReference type="GO" id="GO:0140694">
    <property type="term" value="P:membraneless organelle assembly"/>
    <property type="evidence" value="ECO:0000250"/>
    <property type="project" value="UniProtKB"/>
</dbReference>
<dbReference type="GO" id="GO:0050801">
    <property type="term" value="P:monoatomic ion homeostasis"/>
    <property type="evidence" value="ECO:0007669"/>
    <property type="project" value="Ensembl"/>
</dbReference>
<dbReference type="GO" id="GO:0043066">
    <property type="term" value="P:negative regulation of apoptotic process"/>
    <property type="evidence" value="ECO:0007669"/>
    <property type="project" value="Ensembl"/>
</dbReference>
<dbReference type="GO" id="GO:0090188">
    <property type="term" value="P:negative regulation of pancreatic juice secretion"/>
    <property type="evidence" value="ECO:0000315"/>
    <property type="project" value="UniProtKB"/>
</dbReference>
<dbReference type="GO" id="GO:1903077">
    <property type="term" value="P:negative regulation of protein localization to plasma membrane"/>
    <property type="evidence" value="ECO:0000250"/>
    <property type="project" value="UniProtKB"/>
</dbReference>
<dbReference type="GO" id="GO:0007231">
    <property type="term" value="P:osmosensory signaling pathway"/>
    <property type="evidence" value="ECO:0007669"/>
    <property type="project" value="Ensembl"/>
</dbReference>
<dbReference type="GO" id="GO:0051928">
    <property type="term" value="P:positive regulation of calcium ion transport"/>
    <property type="evidence" value="ECO:0007669"/>
    <property type="project" value="Ensembl"/>
</dbReference>
<dbReference type="GO" id="GO:0010800">
    <property type="term" value="P:positive regulation of peptidyl-threonine phosphorylation"/>
    <property type="evidence" value="ECO:0000250"/>
    <property type="project" value="UniProtKB"/>
</dbReference>
<dbReference type="GO" id="GO:1903078">
    <property type="term" value="P:positive regulation of protein localization to plasma membrane"/>
    <property type="evidence" value="ECO:0000250"/>
    <property type="project" value="UniProtKB"/>
</dbReference>
<dbReference type="GO" id="GO:2000651">
    <property type="term" value="P:positive regulation of sodium ion transmembrane transporter activity"/>
    <property type="evidence" value="ECO:0000250"/>
    <property type="project" value="UniProtKB"/>
</dbReference>
<dbReference type="GO" id="GO:0010765">
    <property type="term" value="P:positive regulation of sodium ion transport"/>
    <property type="evidence" value="ECO:0000250"/>
    <property type="project" value="UniProtKB"/>
</dbReference>
<dbReference type="GO" id="GO:0072659">
    <property type="term" value="P:protein localization to plasma membrane"/>
    <property type="evidence" value="ECO:0000250"/>
    <property type="project" value="UniProtKB"/>
</dbReference>
<dbReference type="GO" id="GO:0090279">
    <property type="term" value="P:regulation of calcium ion import"/>
    <property type="evidence" value="ECO:0000250"/>
    <property type="project" value="UniProtKB"/>
</dbReference>
<dbReference type="GO" id="GO:1904062">
    <property type="term" value="P:regulation of monoatomic cation transmembrane transport"/>
    <property type="evidence" value="ECO:0000315"/>
    <property type="project" value="ARUK-UCL"/>
</dbReference>
<dbReference type="GO" id="GO:0070294">
    <property type="term" value="P:renal sodium ion absorption"/>
    <property type="evidence" value="ECO:0000250"/>
    <property type="project" value="UniProtKB"/>
</dbReference>
<dbReference type="CDD" id="cd14031">
    <property type="entry name" value="STKc_WNK3"/>
    <property type="match status" value="1"/>
</dbReference>
<dbReference type="FunFam" id="3.10.20.90:FF:000007">
    <property type="entry name" value="Serine/threonine-protein kinase WNK1 isoform 1"/>
    <property type="match status" value="1"/>
</dbReference>
<dbReference type="FunFam" id="1.10.510.10:FF:000006">
    <property type="entry name" value="Serine/threonine-protein kinase WNK1 isoform 2"/>
    <property type="match status" value="1"/>
</dbReference>
<dbReference type="FunFam" id="3.30.200.20:FF:000494">
    <property type="entry name" value="serine/threonine-protein kinase WNK2 isoform X2"/>
    <property type="match status" value="1"/>
</dbReference>
<dbReference type="FunFam" id="3.10.20.90:FF:000166">
    <property type="entry name" value="serine/threonine-protein kinase WNK3 isoform X1"/>
    <property type="match status" value="1"/>
</dbReference>
<dbReference type="Gene3D" id="3.10.20.90">
    <property type="entry name" value="Phosphatidylinositol 3-kinase Catalytic Subunit, Chain A, domain 1"/>
    <property type="match status" value="2"/>
</dbReference>
<dbReference type="Gene3D" id="3.30.200.20">
    <property type="entry name" value="Phosphorylase Kinase, domain 1"/>
    <property type="match status" value="1"/>
</dbReference>
<dbReference type="Gene3D" id="1.10.510.10">
    <property type="entry name" value="Transferase(Phosphotransferase) domain 1"/>
    <property type="match status" value="1"/>
</dbReference>
<dbReference type="InterPro" id="IPR056865">
    <property type="entry name" value="CCTL2_WNK"/>
</dbReference>
<dbReference type="InterPro" id="IPR011009">
    <property type="entry name" value="Kinase-like_dom_sf"/>
</dbReference>
<dbReference type="InterPro" id="IPR024678">
    <property type="entry name" value="Kinase_OSR1/WNK_CCT"/>
</dbReference>
<dbReference type="InterPro" id="IPR000719">
    <property type="entry name" value="Prot_kinase_dom"/>
</dbReference>
<dbReference type="InterPro" id="IPR008271">
    <property type="entry name" value="Ser/Thr_kinase_AS"/>
</dbReference>
<dbReference type="InterPro" id="IPR050588">
    <property type="entry name" value="WNK_Ser-Thr_kinase"/>
</dbReference>
<dbReference type="PANTHER" id="PTHR13902">
    <property type="entry name" value="SERINE/THREONINE-PROTEIN KINASE WNK WITH NO LYSINE -RELATED"/>
    <property type="match status" value="1"/>
</dbReference>
<dbReference type="Pfam" id="PF24889">
    <property type="entry name" value="CCTL2_WNK"/>
    <property type="match status" value="1"/>
</dbReference>
<dbReference type="Pfam" id="PF12202">
    <property type="entry name" value="OSR1_C"/>
    <property type="match status" value="1"/>
</dbReference>
<dbReference type="Pfam" id="PF00069">
    <property type="entry name" value="Pkinase"/>
    <property type="match status" value="1"/>
</dbReference>
<dbReference type="SMART" id="SM00220">
    <property type="entry name" value="S_TKc"/>
    <property type="match status" value="1"/>
</dbReference>
<dbReference type="SUPFAM" id="SSF56112">
    <property type="entry name" value="Protein kinase-like (PK-like)"/>
    <property type="match status" value="1"/>
</dbReference>
<dbReference type="PROSITE" id="PS50011">
    <property type="entry name" value="PROTEIN_KINASE_DOM"/>
    <property type="match status" value="1"/>
</dbReference>
<dbReference type="PROSITE" id="PS00108">
    <property type="entry name" value="PROTEIN_KINASE_ST"/>
    <property type="match status" value="1"/>
</dbReference>
<evidence type="ECO:0000250" key="1">
    <source>
        <dbReference type="UniProtKB" id="Q9BYP7"/>
    </source>
</evidence>
<evidence type="ECO:0000250" key="2">
    <source>
        <dbReference type="UniProtKB" id="Q9H4A3"/>
    </source>
</evidence>
<evidence type="ECO:0000250" key="3">
    <source>
        <dbReference type="UniProtKB" id="Q9JIH7"/>
    </source>
</evidence>
<evidence type="ECO:0000255" key="4">
    <source>
        <dbReference type="PROSITE-ProRule" id="PRU00159"/>
    </source>
</evidence>
<evidence type="ECO:0000256" key="5">
    <source>
        <dbReference type="SAM" id="MobiDB-lite"/>
    </source>
</evidence>
<evidence type="ECO:0000269" key="6">
    <source>
    </source>
</evidence>
<evidence type="ECO:0000269" key="7">
    <source>
    </source>
</evidence>
<evidence type="ECO:0000303" key="8">
    <source ref="1"/>
</evidence>
<evidence type="ECO:0000305" key="9"/>
<evidence type="ECO:0000312" key="10">
    <source>
        <dbReference type="MGI" id="MGI:2652875"/>
    </source>
</evidence>
<evidence type="ECO:0007744" key="11">
    <source>
    </source>
</evidence>
<name>WNK3_MOUSE</name>
<feature type="chain" id="PRO_0000278775" description="Serine/threonine-protein kinase WNK3">
    <location>
        <begin position="1"/>
        <end position="1757"/>
    </location>
</feature>
<feature type="domain" description="Protein kinase" evidence="4">
    <location>
        <begin position="146"/>
        <end position="404"/>
    </location>
</feature>
<feature type="region of interest" description="Disordered" evidence="5">
    <location>
        <begin position="1"/>
        <end position="25"/>
    </location>
</feature>
<feature type="region of interest" description="Disordered" evidence="5">
    <location>
        <begin position="66"/>
        <end position="85"/>
    </location>
</feature>
<feature type="region of interest" description="Interaction with KLHL3" evidence="1">
    <location>
        <begin position="536"/>
        <end position="546"/>
    </location>
</feature>
<feature type="region of interest" description="Disordered" evidence="5">
    <location>
        <begin position="551"/>
        <end position="604"/>
    </location>
</feature>
<feature type="region of interest" description="Disordered" evidence="5">
    <location>
        <begin position="674"/>
        <end position="705"/>
    </location>
</feature>
<feature type="region of interest" description="Disordered" evidence="5">
    <location>
        <begin position="1404"/>
        <end position="1440"/>
    </location>
</feature>
<feature type="region of interest" description="Disordered" evidence="5">
    <location>
        <begin position="1479"/>
        <end position="1498"/>
    </location>
</feature>
<feature type="region of interest" description="Disordered" evidence="5">
    <location>
        <begin position="1536"/>
        <end position="1574"/>
    </location>
</feature>
<feature type="region of interest" description="Disordered" evidence="5">
    <location>
        <begin position="1621"/>
        <end position="1650"/>
    </location>
</feature>
<feature type="region of interest" description="Disordered" evidence="5">
    <location>
        <begin position="1734"/>
        <end position="1757"/>
    </location>
</feature>
<feature type="compositionally biased region" description="Basic and acidic residues" evidence="5">
    <location>
        <begin position="66"/>
        <end position="82"/>
    </location>
</feature>
<feature type="compositionally biased region" description="Polar residues" evidence="5">
    <location>
        <begin position="551"/>
        <end position="570"/>
    </location>
</feature>
<feature type="compositionally biased region" description="Polar residues" evidence="5">
    <location>
        <begin position="578"/>
        <end position="604"/>
    </location>
</feature>
<feature type="compositionally biased region" description="Polar residues" evidence="5">
    <location>
        <begin position="674"/>
        <end position="689"/>
    </location>
</feature>
<feature type="compositionally biased region" description="Polar residues" evidence="5">
    <location>
        <begin position="1404"/>
        <end position="1422"/>
    </location>
</feature>
<feature type="compositionally biased region" description="Low complexity" evidence="5">
    <location>
        <begin position="1479"/>
        <end position="1491"/>
    </location>
</feature>
<feature type="compositionally biased region" description="Basic residues" evidence="5">
    <location>
        <begin position="1555"/>
        <end position="1566"/>
    </location>
</feature>
<feature type="compositionally biased region" description="Low complexity" evidence="5">
    <location>
        <begin position="1624"/>
        <end position="1637"/>
    </location>
</feature>
<feature type="compositionally biased region" description="Polar residues" evidence="5">
    <location>
        <begin position="1641"/>
        <end position="1650"/>
    </location>
</feature>
<feature type="compositionally biased region" description="Pro residues" evidence="5">
    <location>
        <begin position="1742"/>
        <end position="1757"/>
    </location>
</feature>
<feature type="active site" description="Proton acceptor" evidence="3">
    <location>
        <position position="293"/>
    </location>
</feature>
<feature type="binding site" evidence="2">
    <location>
        <begin position="226"/>
        <end position="229"/>
    </location>
    <ligand>
        <name>ATP</name>
        <dbReference type="ChEBI" id="CHEBI:30616"/>
    </ligand>
</feature>
<feature type="binding site" evidence="2">
    <location>
        <position position="276"/>
    </location>
    <ligand>
        <name>ATP</name>
        <dbReference type="ChEBI" id="CHEBI:30616"/>
    </ligand>
</feature>
<feature type="modified residue" description="Phosphoserine" evidence="11">
    <location>
        <position position="62"/>
    </location>
</feature>
<feature type="modified residue" description="Phosphoserine; by autocatalysis" evidence="3">
    <location>
        <position position="303"/>
    </location>
</feature>
<feature type="modified residue" description="Phosphoserine; by autocatalysis" evidence="3">
    <location>
        <position position="307"/>
    </location>
</feature>
<feature type="modified residue" description="Phosphothreonine" evidence="1">
    <location>
        <position position="540"/>
    </location>
</feature>
<feature type="modified residue" description="Phosphoserine" evidence="11">
    <location>
        <position position="1039"/>
    </location>
</feature>
<feature type="modified residue" description="Phosphoserine" evidence="11">
    <location>
        <position position="1550"/>
    </location>
</feature>
<feature type="modified residue" description="Phosphoserine" evidence="11">
    <location>
        <position position="1553"/>
    </location>
</feature>
<feature type="modified residue" description="Phosphoserine" evidence="1">
    <location>
        <position position="1595"/>
    </location>
</feature>
<feature type="splice variant" id="VSP_041934" description="In isoform 2." evidence="8">
    <location>
        <begin position="1217"/>
        <end position="1263"/>
    </location>
</feature>
<comment type="function">
    <text evidence="1 6">Serine/threonine-protein kinase component of the WNK3-SPAK/OSR1 kinase cascade, which plays an important role in the regulation of electrolyte homeostasis and regulatory volume increase in response to hyperosmotic stress (By similarity). WNK3 mediates regulatory volume increase in response to hyperosmotic stress by acting as a molecular crowding sensor, which senses cell shrinkage and mediates formation of a membraneless compartment by undergoing liquid-liquid phase separation (By similarity). The membraneless compartment concentrates WNK3 with its substrates, OXSR1/OSR1 and STK39/SPAK, promoting WNK3-dependent phosphorylation and activation of downstream kinases OXSR1/OSR1 and STK39/SPAK (By similarity). Following activation, OXSR1/OSR1 and STK39/SPAK catalyze phosphorylation of ion cotransporters SLC12A1/NKCC2, SLC12A2/NKCC1, SLC12A3/NCC, SLC12A4/KCC1, SLC12A5/KCC2 or SLC12A6/KCC3, regulating their activity (PubMed:19470686). Phosphorylation of Na-K-Cl cotransporters SLC12A2/NKCC1 and SLC12A2/NKCC1 promote their activation and ion influx; simultaneously, phosphorylation of K-Cl cotransporters SLC12A4/KCC1, SLC12A5/KCC2 and SLC12A6/KCC3 inhibits its activity, blocking ion efflux (By similarity). Phosphorylates WNK4, possibly regulating the activity of SLC12A3/NCC (By similarity). May also phosphorylate NEDD4L (By similarity). Also acts as a scaffold protein independently of its protein kinase activity: negatively regulates cell membrane localization of various transporters and channels, such as KCNJ1 and SLC26A9 (By similarity). Increases Ca(2+) influx mediated by TRPV5 and TRPV6 by enhancing their membrane expression level via a kinase-dependent pathway (By similarity).</text>
</comment>
<comment type="catalytic activity">
    <reaction evidence="1">
        <text>L-seryl-[protein] + ATP = O-phospho-L-seryl-[protein] + ADP + H(+)</text>
        <dbReference type="Rhea" id="RHEA:17989"/>
        <dbReference type="Rhea" id="RHEA-COMP:9863"/>
        <dbReference type="Rhea" id="RHEA-COMP:11604"/>
        <dbReference type="ChEBI" id="CHEBI:15378"/>
        <dbReference type="ChEBI" id="CHEBI:29999"/>
        <dbReference type="ChEBI" id="CHEBI:30616"/>
        <dbReference type="ChEBI" id="CHEBI:83421"/>
        <dbReference type="ChEBI" id="CHEBI:456216"/>
        <dbReference type="EC" id="2.7.11.1"/>
    </reaction>
</comment>
<comment type="catalytic activity">
    <reaction evidence="1">
        <text>L-threonyl-[protein] + ATP = O-phospho-L-threonyl-[protein] + ADP + H(+)</text>
        <dbReference type="Rhea" id="RHEA:46608"/>
        <dbReference type="Rhea" id="RHEA-COMP:11060"/>
        <dbReference type="Rhea" id="RHEA-COMP:11605"/>
        <dbReference type="ChEBI" id="CHEBI:15378"/>
        <dbReference type="ChEBI" id="CHEBI:30013"/>
        <dbReference type="ChEBI" id="CHEBI:30616"/>
        <dbReference type="ChEBI" id="CHEBI:61977"/>
        <dbReference type="ChEBI" id="CHEBI:456216"/>
        <dbReference type="EC" id="2.7.11.1"/>
    </reaction>
</comment>
<comment type="cofactor">
    <cofactor evidence="2">
        <name>Mg(2+)</name>
        <dbReference type="ChEBI" id="CHEBI:18420"/>
    </cofactor>
</comment>
<comment type="activity regulation">
    <text evidence="1 3">Activated in response to hyperosmotic stress: cell shrinkage promotes formation of a membraneless compartment that concentrates WNK3 with its substrates, OXSR1/OSR1 and STK39/SPAK (By similarity). Activation requires autophosphorylation of Ser-307 and, to a lower extent, Ser-303 (By similarity). Autophosphorylation and subsequent activation is inhibited by increases in intracellular ionic strength: Cl(-) potently inhibits WNK3 kinase activity via direct binding (By similarity). Also inhibited by K(+) ions. Kinase activity is inhibited by WNK4 (By similarity).</text>
</comment>
<comment type="subunit">
    <text evidence="1">Interacts with WNK1 and WNK4.</text>
</comment>
<comment type="subcellular location">
    <subcellularLocation>
        <location evidence="1">Cytoplasm</location>
    </subcellularLocation>
    <text evidence="2">Mediates formation and localizes to cytoplasmic membraneless compartment in response to hyperosmotic stress.</text>
</comment>
<comment type="alternative products">
    <event type="alternative splicing"/>
    <isoform>
        <id>Q80XP9-1</id>
        <name>1</name>
        <sequence type="displayed"/>
    </isoform>
    <isoform>
        <id>Q80XP9-2</id>
        <name>2</name>
        <sequence type="described" ref="VSP_041934"/>
    </isoform>
</comment>
<comment type="tissue specificity">
    <text evidence="7">Expressed in pancreatic duct (PubMed:21317537).</text>
</comment>
<comment type="domain">
    <text evidence="2">Disordered regions undergo liquid-liquid phase separation (LLPS) for the formation of a cytoplasmic membraneless compartment that concentrates WNK1 with its substrates, OXSR1/OSR1 and STK39/SPAK.</text>
</comment>
<comment type="PTM">
    <text evidence="1 3">Autophosphorylated at Ser-303 and Ser-307, promoting its activity (By similarity). Phosphorylation at Thr-540 prevents interaction with KLHL3 and subsequent ubiquitination and degradation by the BCR(KLHL3) complex (By similarity).</text>
</comment>
<comment type="PTM">
    <text evidence="1">Ubiquitinated by the BCR(KLHL2) complex, leading to its degradation. Ubiquitinated by the BCR(KLHL3) complex, leading to its degradation.</text>
</comment>
<comment type="similarity">
    <text evidence="4">Belongs to the protein kinase superfamily. Ser/Thr protein kinase family. WNK subfamily.</text>
</comment>
<comment type="caution">
    <text evidence="2">Was named WNK/'with no lysine(K)' because key residues for catalysis, including the lysine involved in ATP binding, are either not conserved or differ compared to the residues described in other kinase family proteins.</text>
</comment>
<protein>
    <recommendedName>
        <fullName evidence="9">Serine/threonine-protein kinase WNK3</fullName>
        <ecNumber evidence="1">2.7.11.1</ecNumber>
    </recommendedName>
    <alternativeName>
        <fullName evidence="10">Protein kinase lysine-deficient 3</fullName>
    </alternativeName>
    <alternativeName>
        <fullName evidence="9">Protein kinase with no lysine 3</fullName>
    </alternativeName>
</protein>
<accession>Q80XP9</accession>
<accession>H6WJI2</accession>
<accession>H6WJI3</accession>
<reference key="1">
    <citation type="submission" date="2011-12" db="EMBL/GenBank/DDBJ databases">
        <title>Mouse Wnk3 gene encodes multiple continuous open reading frames.</title>
        <authorList>
            <person name="Shmukler B.E."/>
            <person name="Alper S.L."/>
        </authorList>
    </citation>
    <scope>NUCLEOTIDE SEQUENCE [MRNA] (ISOFORMS 1 AND 2)</scope>
    <source>
        <strain>C57BL/6J</strain>
        <tissue>Brain</tissue>
    </source>
</reference>
<reference key="2">
    <citation type="journal article" date="2009" name="PLoS Biol.">
        <title>Lineage-specific biology revealed by a finished genome assembly of the mouse.</title>
        <authorList>
            <person name="Church D.M."/>
            <person name="Goodstadt L."/>
            <person name="Hillier L.W."/>
            <person name="Zody M.C."/>
            <person name="Goldstein S."/>
            <person name="She X."/>
            <person name="Bult C.J."/>
            <person name="Agarwala R."/>
            <person name="Cherry J.L."/>
            <person name="DiCuccio M."/>
            <person name="Hlavina W."/>
            <person name="Kapustin Y."/>
            <person name="Meric P."/>
            <person name="Maglott D."/>
            <person name="Birtle Z."/>
            <person name="Marques A.C."/>
            <person name="Graves T."/>
            <person name="Zhou S."/>
            <person name="Teague B."/>
            <person name="Potamousis K."/>
            <person name="Churas C."/>
            <person name="Place M."/>
            <person name="Herschleb J."/>
            <person name="Runnheim R."/>
            <person name="Forrest D."/>
            <person name="Amos-Landgraf J."/>
            <person name="Schwartz D.C."/>
            <person name="Cheng Z."/>
            <person name="Lindblad-Toh K."/>
            <person name="Eichler E.E."/>
            <person name="Ponting C.P."/>
        </authorList>
    </citation>
    <scope>NUCLEOTIDE SEQUENCE [LARGE SCALE GENOMIC DNA]</scope>
    <source>
        <strain>C57BL/6J</strain>
    </source>
</reference>
<reference key="3">
    <citation type="journal article" date="2004" name="Genome Res.">
        <title>The status, quality, and expansion of the NIH full-length cDNA project: the Mammalian Gene Collection (MGC).</title>
        <authorList>
            <consortium name="The MGC Project Team"/>
        </authorList>
    </citation>
    <scope>NUCLEOTIDE SEQUENCE [LARGE SCALE MRNA] OF 1296-1757</scope>
    <source>
        <strain>C57BL/6J</strain>
        <tissue>Embryonic brain</tissue>
    </source>
</reference>
<reference key="4">
    <citation type="journal article" date="2009" name="J. Am. Soc. Nephrol.">
        <title>Renal and brain isoforms of WNK3 have opposite effects on NCCT expression.</title>
        <authorList>
            <person name="Glover M."/>
            <person name="Zuber A.M."/>
            <person name="O'Shaughnessy K.M."/>
        </authorList>
    </citation>
    <scope>FUNCTION</scope>
    <scope>ALTERNATIVE SPLICING</scope>
</reference>
<reference key="5">
    <citation type="journal article" date="2010" name="Cell">
        <title>A tissue-specific atlas of mouse protein phosphorylation and expression.</title>
        <authorList>
            <person name="Huttlin E.L."/>
            <person name="Jedrychowski M.P."/>
            <person name="Elias J.E."/>
            <person name="Goswami T."/>
            <person name="Rad R."/>
            <person name="Beausoleil S.A."/>
            <person name="Villen J."/>
            <person name="Haas W."/>
            <person name="Sowa M.E."/>
            <person name="Gygi S.P."/>
        </authorList>
    </citation>
    <scope>PHOSPHORYLATION [LARGE SCALE ANALYSIS] AT SER-62; SER-1039; SER-1550 AND SER-1553</scope>
    <scope>IDENTIFICATION BY MASS SPECTROMETRY [LARGE SCALE ANALYSIS]</scope>
    <source>
        <tissue>Brain</tissue>
        <tissue>Testis</tissue>
    </source>
</reference>
<reference key="6">
    <citation type="journal article" date="2011" name="J. Clin. Invest.">
        <title>IRBIT governs epithelial secretion in mice by antagonizing the WNK/SPAK kinase pathway.</title>
        <authorList>
            <person name="Yang D."/>
            <person name="Li Q."/>
            <person name="So I."/>
            <person name="Huang C.L."/>
            <person name="Ando H."/>
            <person name="Mizutani A."/>
            <person name="Seki G."/>
            <person name="Mikoshiba K."/>
            <person name="Thomas P.J."/>
            <person name="Muallem S."/>
        </authorList>
    </citation>
    <scope>TISSUE SPECIFICITY</scope>
</reference>
<organism>
    <name type="scientific">Mus musculus</name>
    <name type="common">Mouse</name>
    <dbReference type="NCBI Taxonomy" id="10090"/>
    <lineage>
        <taxon>Eukaryota</taxon>
        <taxon>Metazoa</taxon>
        <taxon>Chordata</taxon>
        <taxon>Craniata</taxon>
        <taxon>Vertebrata</taxon>
        <taxon>Euteleostomi</taxon>
        <taxon>Mammalia</taxon>
        <taxon>Eutheria</taxon>
        <taxon>Euarchontoglires</taxon>
        <taxon>Glires</taxon>
        <taxon>Rodentia</taxon>
        <taxon>Myomorpha</taxon>
        <taxon>Muroidea</taxon>
        <taxon>Muridae</taxon>
        <taxon>Murinae</taxon>
        <taxon>Mus</taxon>
        <taxon>Mus</taxon>
    </lineage>
</organism>
<gene>
    <name evidence="10" type="primary">Wnk3</name>
</gene>
<keyword id="KW-0025">Alternative splicing</keyword>
<keyword id="KW-0067">ATP-binding</keyword>
<keyword id="KW-0963">Cytoplasm</keyword>
<keyword id="KW-0418">Kinase</keyword>
<keyword id="KW-0547">Nucleotide-binding</keyword>
<keyword id="KW-0597">Phosphoprotein</keyword>
<keyword id="KW-1185">Reference proteome</keyword>
<keyword id="KW-0723">Serine/threonine-protein kinase</keyword>
<keyword id="KW-0808">Transferase</keyword>
<keyword id="KW-0832">Ubl conjugation</keyword>
<proteinExistence type="evidence at protein level"/>
<sequence length="1757" mass="193991">MATDSGEPASTEDSEKPDGVSFENRAARAVAPLTVEARIKEKYSTFSASGENIERKRFFRKSVEMTEDDKVAESSRRDERKAATNISRVDKVPTNVLRGGQEVKYEQCSKATSESSKDCFKEKTEKEMEEEAEMKAVATSPSGRFLKFDIELGRGAFKTVYKGLDTETWVEVAWCELQDRKLTKAEQQRFKEEAEMLKGLQHPNIVRFYDSWESTLKGKKCIVLVTELMTSGTLKTYLKRFKVMKPKVLRSWCRQILKGLQFLHTRTPPIIHRDLKCDNIFITGPTGSVKIGDLGLATLMRTSFAKSVIGTPEFMAPEMYEEHYDESVDVYAFGMCMLEMATSEYPYSECQNAAQIYRKVTSGIKPASFNKVTDPEVKEIIEGCIRQNKSERLSIKDLLNHAFFAEDTGLRVELAEEDDCSNSSLALRLWVEDPKKLKGKHKDNEAIEFSFNLEADTPEEVAYEMVKSGFFHESDSKAVAKSIRDRVTLIKKIREKKPAGCLEERRDSQCKYVRNVLPQQQTATLQPTPGPHTAAEYEETEVDQHVRQQFLQGKPQQQSSSVRGDTSSEPTAGPVLHSDTSSHPTVAYSSNQTTSSQEQPKLTQSPVLPVVQGQSSVMPIYAAGVGVVSQSQISPLTIQKVSQIKPVSQPIGAEQQATLQNPDFVRSLNQDVTSVKENTNNPDTPSGNGKQDRNKQRRASCPRPEKGTKFQLTVLQVSVSGDNMVECQLETHNNKMVTFKFDVDGDAPEDIADYMVEDNFVLENEKEKFVEELRAIVGQAQEILHVHSAVEKSIGVDSVALESNSNQTGSSEQVLINSASTQTSNESAPQSSPVGRWRFCINQTIKNREAQSPPSLQPSMAMVPGLHPFPSSRNTSNQAISQNTVFTIENNPGHRELFTSKLDHKDVVDGKIGEHASIETEQSSISYQVEDDRQIMTPATDNSNYSAALVCPVPGECEALTSQAGMFMPTYPNQQAAVLADVHIAYPGESVPIGGNAALTSVLVSSDQKPQSLSVQQPTIDAEFISKEGETTVNTETSSPKAVIATQTPGFEPAVILPATILESDGERPPKMEFADNRIKTLDEKLRNLLYQEHSISSICPESQKDTQSIDSPFSSSAEDILSYSMPEVIAISHCGIQDSPAQSPNFQQTGSKILSNVAASQPAHISVFKKDLNVITSVPSELCLHEMSPDASLPGDPEAYPAAVSSDGTIHLQTGGGYFGLSFTCPSLKNPISRKSWTRKLKSWAYRLRQSTSFFKRSKVRQVETEDKRSAIASDPIPLTREFSSDTRALSRCKAMSGSFQRGRFQVITVPQQQPVKMMSFGKDHRPPFNKTTVQSSEQALTFAEAAVSQLIEVEPAMPTHKASVSSRKLRTLYETFKEDKGDPEQGDIVSYSTACETSVSSVATEKNVTSTTEVSVQSGSEPLDKEKNESTPGKQTCTNEFSATLAGNRKSVTKTRPEGDQYLPLREEQAYAQTQNSLFYSPSSPMSSDNESEIEDEDLKVELQRLREKHIQEVVSLQTQQNKELQELYERLRATKDNKAQSSEVPLSPASPRRPRSFKSKLRSRPQSMTHSDNLVVKDALGVESNTVSCQQSPASKKGMFTDDLHKLVDDWTRETVGHFPSKPSLNQLKQSQQKSEAENWNKSCESTPSTMGYTSNWISSLSQIRGAAPTSLPQGLPLPSFHGPLASYGMPHVCQYNAVGAAGYPVQWVGISGPAQQSVVLPTQSGGLFQPGMNLQSFPAPPVQNPASIPPGPK</sequence>